<protein>
    <recommendedName>
        <fullName evidence="1">Adenylate kinase</fullName>
        <shortName evidence="1">AK</shortName>
        <ecNumber evidence="1">2.7.4.3</ecNumber>
    </recommendedName>
    <alternativeName>
        <fullName evidence="1">ATP-AMP transphosphorylase</fullName>
    </alternativeName>
    <alternativeName>
        <fullName evidence="1">ATP:AMP phosphotransferase</fullName>
    </alternativeName>
    <alternativeName>
        <fullName evidence="1">Adenylate monophosphate kinase</fullName>
    </alternativeName>
</protein>
<reference key="1">
    <citation type="journal article" date="2001" name="Proc. Natl. Acad. Sci. U.S.A.">
        <title>Complete genome sequence of an M1 strain of Streptococcus pyogenes.</title>
        <authorList>
            <person name="Ferretti J.J."/>
            <person name="McShan W.M."/>
            <person name="Ajdic D.J."/>
            <person name="Savic D.J."/>
            <person name="Savic G."/>
            <person name="Lyon K."/>
            <person name="Primeaux C."/>
            <person name="Sezate S."/>
            <person name="Suvorov A.N."/>
            <person name="Kenton S."/>
            <person name="Lai H.S."/>
            <person name="Lin S.P."/>
            <person name="Qian Y."/>
            <person name="Jia H.G."/>
            <person name="Najar F.Z."/>
            <person name="Ren Q."/>
            <person name="Zhu H."/>
            <person name="Song L."/>
            <person name="White J."/>
            <person name="Yuan X."/>
            <person name="Clifton S.W."/>
            <person name="Roe B.A."/>
            <person name="McLaughlin R.E."/>
        </authorList>
    </citation>
    <scope>NUCLEOTIDE SEQUENCE [LARGE SCALE GENOMIC DNA]</scope>
    <source>
        <strain>ATCC 700294 / SF370 / Serotype M1</strain>
    </source>
</reference>
<reference key="2">
    <citation type="journal article" date="2005" name="J. Infect. Dis.">
        <title>Evolutionary origin and emergence of a highly successful clone of serotype M1 group A Streptococcus involved multiple horizontal gene transfer events.</title>
        <authorList>
            <person name="Sumby P."/>
            <person name="Porcella S.F."/>
            <person name="Madrigal A.G."/>
            <person name="Barbian K.D."/>
            <person name="Virtaneva K."/>
            <person name="Ricklefs S.M."/>
            <person name="Sturdevant D.E."/>
            <person name="Graham M.R."/>
            <person name="Vuopio-Varkila J."/>
            <person name="Hoe N.P."/>
            <person name="Musser J.M."/>
        </authorList>
    </citation>
    <scope>NUCLEOTIDE SEQUENCE [LARGE SCALE GENOMIC DNA]</scope>
    <source>
        <strain>ATCC BAA-947 / MGAS5005 / Serotype M1</strain>
    </source>
</reference>
<sequence>MNLLIMGLPGAGKGTQAAKIVEEFGIAHISTGDMFRAAMANQTEMGRLAKSYIDKGELVPDEVTNGIVKERLAEDDIAEKGFLLDGYPRTIEQAHALDATLEELGLRLDGVINIKVDPSCLVERLSGRIINRKTGETFHKVFNPPVDYKEEDYYQREDDKPETVKRRLDVNMAQGEPILEHYRKLGLVTDIEGNQEITDVFADVEKALLELK</sequence>
<comment type="function">
    <text evidence="1">Catalyzes the reversible transfer of the terminal phosphate group between ATP and AMP. Plays an important role in cellular energy homeostasis and in adenine nucleotide metabolism.</text>
</comment>
<comment type="catalytic activity">
    <reaction evidence="1">
        <text>AMP + ATP = 2 ADP</text>
        <dbReference type="Rhea" id="RHEA:12973"/>
        <dbReference type="ChEBI" id="CHEBI:30616"/>
        <dbReference type="ChEBI" id="CHEBI:456215"/>
        <dbReference type="ChEBI" id="CHEBI:456216"/>
        <dbReference type="EC" id="2.7.4.3"/>
    </reaction>
</comment>
<comment type="pathway">
    <text evidence="1">Purine metabolism; AMP biosynthesis via salvage pathway; AMP from ADP: step 1/1.</text>
</comment>
<comment type="subunit">
    <text evidence="1">Monomer.</text>
</comment>
<comment type="subcellular location">
    <subcellularLocation>
        <location evidence="1">Cytoplasm</location>
    </subcellularLocation>
</comment>
<comment type="domain">
    <text evidence="1">Consists of three domains, a large central CORE domain and two small peripheral domains, NMPbind and LID, which undergo movements during catalysis. The LID domain closes over the site of phosphoryl transfer upon ATP binding. Assembling and dissambling the active center during each catalytic cycle provides an effective means to prevent ATP hydrolysis.</text>
</comment>
<comment type="similarity">
    <text evidence="1">Belongs to the adenylate kinase family.</text>
</comment>
<accession>P69882</accession>
<accession>P82549</accession>
<accession>Q491N4</accession>
<proteinExistence type="inferred from homology"/>
<feature type="chain" id="PRO_0000158862" description="Adenylate kinase">
    <location>
        <begin position="1"/>
        <end position="212"/>
    </location>
</feature>
<feature type="region of interest" description="NMP" evidence="1">
    <location>
        <begin position="30"/>
        <end position="59"/>
    </location>
</feature>
<feature type="region of interest" description="LID" evidence="1">
    <location>
        <begin position="127"/>
        <end position="159"/>
    </location>
</feature>
<feature type="binding site" evidence="1">
    <location>
        <begin position="10"/>
        <end position="15"/>
    </location>
    <ligand>
        <name>ATP</name>
        <dbReference type="ChEBI" id="CHEBI:30616"/>
    </ligand>
</feature>
<feature type="binding site" evidence="1">
    <location>
        <position position="31"/>
    </location>
    <ligand>
        <name>AMP</name>
        <dbReference type="ChEBI" id="CHEBI:456215"/>
    </ligand>
</feature>
<feature type="binding site" evidence="1">
    <location>
        <position position="36"/>
    </location>
    <ligand>
        <name>AMP</name>
        <dbReference type="ChEBI" id="CHEBI:456215"/>
    </ligand>
</feature>
<feature type="binding site" evidence="1">
    <location>
        <begin position="57"/>
        <end position="59"/>
    </location>
    <ligand>
        <name>AMP</name>
        <dbReference type="ChEBI" id="CHEBI:456215"/>
    </ligand>
</feature>
<feature type="binding site" evidence="1">
    <location>
        <begin position="86"/>
        <end position="89"/>
    </location>
    <ligand>
        <name>AMP</name>
        <dbReference type="ChEBI" id="CHEBI:456215"/>
    </ligand>
</feature>
<feature type="binding site" evidence="1">
    <location>
        <position position="93"/>
    </location>
    <ligand>
        <name>AMP</name>
        <dbReference type="ChEBI" id="CHEBI:456215"/>
    </ligand>
</feature>
<feature type="binding site" evidence="1">
    <location>
        <position position="128"/>
    </location>
    <ligand>
        <name>ATP</name>
        <dbReference type="ChEBI" id="CHEBI:30616"/>
    </ligand>
</feature>
<feature type="binding site" evidence="1">
    <location>
        <begin position="137"/>
        <end position="138"/>
    </location>
    <ligand>
        <name>ATP</name>
        <dbReference type="ChEBI" id="CHEBI:30616"/>
    </ligand>
</feature>
<feature type="binding site" evidence="1">
    <location>
        <position position="156"/>
    </location>
    <ligand>
        <name>AMP</name>
        <dbReference type="ChEBI" id="CHEBI:456215"/>
    </ligand>
</feature>
<feature type="binding site" evidence="1">
    <location>
        <position position="167"/>
    </location>
    <ligand>
        <name>AMP</name>
        <dbReference type="ChEBI" id="CHEBI:456215"/>
    </ligand>
</feature>
<feature type="binding site" evidence="1">
    <location>
        <position position="195"/>
    </location>
    <ligand>
        <name>ATP</name>
        <dbReference type="ChEBI" id="CHEBI:30616"/>
    </ligand>
</feature>
<gene>
    <name evidence="1" type="primary">adk</name>
    <name type="ordered locus">SPy_0074</name>
    <name type="ordered locus">M5005_Spy0065</name>
</gene>
<dbReference type="EC" id="2.7.4.3" evidence="1"/>
<dbReference type="EMBL" id="AE004092">
    <property type="protein sequence ID" value="AAK33203.1"/>
    <property type="molecule type" value="Genomic_DNA"/>
</dbReference>
<dbReference type="EMBL" id="CP000017">
    <property type="protein sequence ID" value="AAZ50684.1"/>
    <property type="molecule type" value="Genomic_DNA"/>
</dbReference>
<dbReference type="RefSeq" id="NP_268481.1">
    <property type="nucleotide sequence ID" value="NC_002737.2"/>
</dbReference>
<dbReference type="SMR" id="P69882"/>
<dbReference type="PaxDb" id="1314-HKU360_00098"/>
<dbReference type="KEGG" id="spy:SPy_0074"/>
<dbReference type="KEGG" id="spz:M5005_Spy0065"/>
<dbReference type="PATRIC" id="fig|160490.10.peg.65"/>
<dbReference type="HOGENOM" id="CLU_032354_1_2_9"/>
<dbReference type="OMA" id="VYHEQTA"/>
<dbReference type="UniPathway" id="UPA00588">
    <property type="reaction ID" value="UER00649"/>
</dbReference>
<dbReference type="Proteomes" id="UP000000750">
    <property type="component" value="Chromosome"/>
</dbReference>
<dbReference type="GO" id="GO:0005737">
    <property type="term" value="C:cytoplasm"/>
    <property type="evidence" value="ECO:0007669"/>
    <property type="project" value="UniProtKB-SubCell"/>
</dbReference>
<dbReference type="GO" id="GO:0004017">
    <property type="term" value="F:adenylate kinase activity"/>
    <property type="evidence" value="ECO:0007669"/>
    <property type="project" value="UniProtKB-UniRule"/>
</dbReference>
<dbReference type="GO" id="GO:0005524">
    <property type="term" value="F:ATP binding"/>
    <property type="evidence" value="ECO:0007669"/>
    <property type="project" value="UniProtKB-UniRule"/>
</dbReference>
<dbReference type="GO" id="GO:0044209">
    <property type="term" value="P:AMP salvage"/>
    <property type="evidence" value="ECO:0007669"/>
    <property type="project" value="UniProtKB-UniRule"/>
</dbReference>
<dbReference type="CDD" id="cd01428">
    <property type="entry name" value="ADK"/>
    <property type="match status" value="1"/>
</dbReference>
<dbReference type="FunFam" id="3.40.50.300:FF:000106">
    <property type="entry name" value="Adenylate kinase mitochondrial"/>
    <property type="match status" value="1"/>
</dbReference>
<dbReference type="Gene3D" id="3.40.50.300">
    <property type="entry name" value="P-loop containing nucleotide triphosphate hydrolases"/>
    <property type="match status" value="1"/>
</dbReference>
<dbReference type="HAMAP" id="MF_00235">
    <property type="entry name" value="Adenylate_kinase_Adk"/>
    <property type="match status" value="1"/>
</dbReference>
<dbReference type="InterPro" id="IPR006259">
    <property type="entry name" value="Adenyl_kin_sub"/>
</dbReference>
<dbReference type="InterPro" id="IPR000850">
    <property type="entry name" value="Adenylat/UMP-CMP_kin"/>
</dbReference>
<dbReference type="InterPro" id="IPR033690">
    <property type="entry name" value="Adenylat_kinase_CS"/>
</dbReference>
<dbReference type="InterPro" id="IPR027417">
    <property type="entry name" value="P-loop_NTPase"/>
</dbReference>
<dbReference type="NCBIfam" id="TIGR01351">
    <property type="entry name" value="adk"/>
    <property type="match status" value="1"/>
</dbReference>
<dbReference type="NCBIfam" id="NF001380">
    <property type="entry name" value="PRK00279.1-2"/>
    <property type="match status" value="1"/>
</dbReference>
<dbReference type="NCBIfam" id="NF001381">
    <property type="entry name" value="PRK00279.1-3"/>
    <property type="match status" value="1"/>
</dbReference>
<dbReference type="NCBIfam" id="NF001382">
    <property type="entry name" value="PRK00279.1-4"/>
    <property type="match status" value="1"/>
</dbReference>
<dbReference type="NCBIfam" id="NF011100">
    <property type="entry name" value="PRK14527.1"/>
    <property type="match status" value="1"/>
</dbReference>
<dbReference type="PANTHER" id="PTHR23359">
    <property type="entry name" value="NUCLEOTIDE KINASE"/>
    <property type="match status" value="1"/>
</dbReference>
<dbReference type="Pfam" id="PF00406">
    <property type="entry name" value="ADK"/>
    <property type="match status" value="1"/>
</dbReference>
<dbReference type="PRINTS" id="PR00094">
    <property type="entry name" value="ADENYLTKNASE"/>
</dbReference>
<dbReference type="SUPFAM" id="SSF52540">
    <property type="entry name" value="P-loop containing nucleoside triphosphate hydrolases"/>
    <property type="match status" value="1"/>
</dbReference>
<dbReference type="PROSITE" id="PS00113">
    <property type="entry name" value="ADENYLATE_KINASE"/>
    <property type="match status" value="1"/>
</dbReference>
<name>KAD_STRP1</name>
<keyword id="KW-0067">ATP-binding</keyword>
<keyword id="KW-0963">Cytoplasm</keyword>
<keyword id="KW-0418">Kinase</keyword>
<keyword id="KW-0545">Nucleotide biosynthesis</keyword>
<keyword id="KW-0547">Nucleotide-binding</keyword>
<keyword id="KW-1185">Reference proteome</keyword>
<keyword id="KW-0808">Transferase</keyword>
<organism>
    <name type="scientific">Streptococcus pyogenes serotype M1</name>
    <dbReference type="NCBI Taxonomy" id="301447"/>
    <lineage>
        <taxon>Bacteria</taxon>
        <taxon>Bacillati</taxon>
        <taxon>Bacillota</taxon>
        <taxon>Bacilli</taxon>
        <taxon>Lactobacillales</taxon>
        <taxon>Streptococcaceae</taxon>
        <taxon>Streptococcus</taxon>
    </lineage>
</organism>
<evidence type="ECO:0000255" key="1">
    <source>
        <dbReference type="HAMAP-Rule" id="MF_00235"/>
    </source>
</evidence>